<name>RODA_MYCTU</name>
<proteinExistence type="evidence at protein level"/>
<organism>
    <name type="scientific">Mycobacterium tuberculosis (strain ATCC 25618 / H37Rv)</name>
    <dbReference type="NCBI Taxonomy" id="83332"/>
    <lineage>
        <taxon>Bacteria</taxon>
        <taxon>Bacillati</taxon>
        <taxon>Actinomycetota</taxon>
        <taxon>Actinomycetes</taxon>
        <taxon>Mycobacteriales</taxon>
        <taxon>Mycobacteriaceae</taxon>
        <taxon>Mycobacterium</taxon>
        <taxon>Mycobacterium tuberculosis complex</taxon>
    </lineage>
</organism>
<comment type="function">
    <text evidence="2">Transglycosylase involved in peptidoglycan cell wall formation (PubMed:29530985). Required for the regulation of cell length. Plays critical roles for the survival of the pathogen inside the host. Required for both bacterial survival and formation of granuloma structures in a guinea pig infection model (PubMed:29530985).</text>
</comment>
<comment type="catalytic activity">
    <reaction evidence="5">
        <text>[GlcNAc-(1-&gt;4)-Mur2Ac(oyl-L-Ala-gamma-D-Glu-L-Lys-D-Ala-D-Ala)](n)-di-trans,octa-cis-undecaprenyl diphosphate + beta-D-GlcNAc-(1-&gt;4)-Mur2Ac(oyl-L-Ala-gamma-D-Glu-L-Lys-D-Ala-D-Ala)-di-trans,octa-cis-undecaprenyl diphosphate = [GlcNAc-(1-&gt;4)-Mur2Ac(oyl-L-Ala-gamma-D-Glu-L-Lys-D-Ala-D-Ala)](n+1)-di-trans,octa-cis-undecaprenyl diphosphate + di-trans,octa-cis-undecaprenyl diphosphate + H(+)</text>
        <dbReference type="Rhea" id="RHEA:23708"/>
        <dbReference type="Rhea" id="RHEA-COMP:9602"/>
        <dbReference type="Rhea" id="RHEA-COMP:9603"/>
        <dbReference type="ChEBI" id="CHEBI:15378"/>
        <dbReference type="ChEBI" id="CHEBI:58405"/>
        <dbReference type="ChEBI" id="CHEBI:60033"/>
        <dbReference type="ChEBI" id="CHEBI:78435"/>
        <dbReference type="EC" id="2.4.99.28"/>
    </reaction>
</comment>
<comment type="activity regulation">
    <text evidence="2">Phosphorylation at Thr-463 may be important for modulating interactions with other cell division proteins, thus regulating the cell division process.</text>
</comment>
<comment type="pathway">
    <text evidence="5">Cell wall biogenesis; peptidoglycan biosynthesis.</text>
</comment>
<comment type="subcellular location">
    <subcellularLocation>
        <location evidence="4">Cell inner membrane</location>
        <topology evidence="1">Multi-pass membrane protein</topology>
    </subcellularLocation>
</comment>
<comment type="PTM">
    <text evidence="2">Phosphorylated on Thr-463, probably by PknB and PknH.</text>
</comment>
<comment type="disruption phenotype">
    <text evidence="2">Deletion of the gene does not impact in vitro growth, but it leads to aberrations in the cell length. Deletion enhances sensitivity to nisin and vancomycin. Also exhibits hypersensitivity to moenomycin. Mutant shows compromised bacterial virulence in the host.</text>
</comment>
<comment type="similarity">
    <text evidence="4">Belongs to the SEDS family.</text>
</comment>
<sequence>MTTRLQAPVAVTPPLPTRRNAELLLLCFAAVITFAALLVVQANQDQGVPWDLTSYGLAFLTLFGSAHLAIRRFAPYTDPLLLPVVALLNGLGLVMIHRLDLVDNEIGEHRHPSANQQMLWTLVGVAAFALVVTFLKDHRQLARYGYICGLAGLVFLAVPALLPAALSEQNGAKIWIRLPGFSIQPAEFSKILLLIFFSAVLVAKRGLFTSAGKHLLGMTLPRPRDLAPLLAAWVISVGVMVFEKDLGASLLLYTSFLVVVYLATQRFSWVVIGLTLFAAGTLVAYFIFEHVRLRVQTWLDPFADPDGTGYQIVQSLFSFATGGIFGTGLGNGQPDTVPAASTDFIIAAFGEELGLVGLTAILMLYTIVIIRGLRTAIATRDSFGKLLAAGLSSTLAIQLFIVVGGVTRLIPLTGLTTPWMSYGGSSLLANYILLAILARISHGARRPLRTRPRNKSPITAAGTEVIERV</sequence>
<feature type="chain" id="PRO_0000062710" description="Peptidoglycan glycosyltransferase RodA">
    <location>
        <begin position="1"/>
        <end position="469"/>
    </location>
</feature>
<feature type="transmembrane region" description="Helical" evidence="1">
    <location>
        <begin position="20"/>
        <end position="40"/>
    </location>
</feature>
<feature type="transmembrane region" description="Helical" evidence="1">
    <location>
        <begin position="50"/>
        <end position="70"/>
    </location>
</feature>
<feature type="transmembrane region" description="Helical" evidence="1">
    <location>
        <begin position="76"/>
        <end position="96"/>
    </location>
</feature>
<feature type="transmembrane region" description="Helical" evidence="1">
    <location>
        <begin position="115"/>
        <end position="135"/>
    </location>
</feature>
<feature type="transmembrane region" description="Helical" evidence="1">
    <location>
        <begin position="146"/>
        <end position="166"/>
    </location>
</feature>
<feature type="transmembrane region" description="Helical" evidence="1">
    <location>
        <begin position="183"/>
        <end position="203"/>
    </location>
</feature>
<feature type="transmembrane region" description="Helical" evidence="1">
    <location>
        <begin position="226"/>
        <end position="246"/>
    </location>
</feature>
<feature type="transmembrane region" description="Helical" evidence="1">
    <location>
        <begin position="248"/>
        <end position="264"/>
    </location>
</feature>
<feature type="transmembrane region" description="Helical" evidence="1">
    <location>
        <begin position="267"/>
        <end position="287"/>
    </location>
</feature>
<feature type="transmembrane region" description="Helical" evidence="1">
    <location>
        <begin position="312"/>
        <end position="332"/>
    </location>
</feature>
<feature type="transmembrane region" description="Helical" evidence="1">
    <location>
        <begin position="344"/>
        <end position="364"/>
    </location>
</feature>
<feature type="transmembrane region" description="Helical" evidence="1">
    <location>
        <begin position="386"/>
        <end position="406"/>
    </location>
</feature>
<feature type="transmembrane region" description="Helical" evidence="1">
    <location>
        <begin position="418"/>
        <end position="438"/>
    </location>
</feature>
<feature type="modified residue" description="Phosphothreonine" evidence="2">
    <location>
        <position position="463"/>
    </location>
</feature>
<feature type="mutagenesis site" description="Can rescue the moenomycin sensitivity phenotype of the deletion mutant, but cannot rescue the aberrant short-length phenotype." evidence="2">
    <original>T</original>
    <variation>A</variation>
    <location>
        <position position="463"/>
    </location>
</feature>
<feature type="mutagenesis site" description="Can rescue the moenomycin sensitivity phenotype and the aberrant short-length phenotype of the deletion mutant." evidence="2">
    <original>T</original>
    <variation>E</variation>
    <location>
        <position position="463"/>
    </location>
</feature>
<keyword id="KW-0997">Cell inner membrane</keyword>
<keyword id="KW-1003">Cell membrane</keyword>
<keyword id="KW-0133">Cell shape</keyword>
<keyword id="KW-0961">Cell wall biogenesis/degradation</keyword>
<keyword id="KW-0328">Glycosyltransferase</keyword>
<keyword id="KW-0472">Membrane</keyword>
<keyword id="KW-0573">Peptidoglycan synthesis</keyword>
<keyword id="KW-0597">Phosphoprotein</keyword>
<keyword id="KW-1185">Reference proteome</keyword>
<keyword id="KW-0808">Transferase</keyword>
<keyword id="KW-0812">Transmembrane</keyword>
<keyword id="KW-1133">Transmembrane helix</keyword>
<reference key="1">
    <citation type="journal article" date="1998" name="Nature">
        <title>Deciphering the biology of Mycobacterium tuberculosis from the complete genome sequence.</title>
        <authorList>
            <person name="Cole S.T."/>
            <person name="Brosch R."/>
            <person name="Parkhill J."/>
            <person name="Garnier T."/>
            <person name="Churcher C.M."/>
            <person name="Harris D.E."/>
            <person name="Gordon S.V."/>
            <person name="Eiglmeier K."/>
            <person name="Gas S."/>
            <person name="Barry C.E. III"/>
            <person name="Tekaia F."/>
            <person name="Badcock K."/>
            <person name="Basham D."/>
            <person name="Brown D."/>
            <person name="Chillingworth T."/>
            <person name="Connor R."/>
            <person name="Davies R.M."/>
            <person name="Devlin K."/>
            <person name="Feltwell T."/>
            <person name="Gentles S."/>
            <person name="Hamlin N."/>
            <person name="Holroyd S."/>
            <person name="Hornsby T."/>
            <person name="Jagels K."/>
            <person name="Krogh A."/>
            <person name="McLean J."/>
            <person name="Moule S."/>
            <person name="Murphy L.D."/>
            <person name="Oliver S."/>
            <person name="Osborne J."/>
            <person name="Quail M.A."/>
            <person name="Rajandream M.A."/>
            <person name="Rogers J."/>
            <person name="Rutter S."/>
            <person name="Seeger K."/>
            <person name="Skelton S."/>
            <person name="Squares S."/>
            <person name="Squares R."/>
            <person name="Sulston J.E."/>
            <person name="Taylor K."/>
            <person name="Whitehead S."/>
            <person name="Barrell B.G."/>
        </authorList>
    </citation>
    <scope>NUCLEOTIDE SEQUENCE [LARGE SCALE GENOMIC DNA]</scope>
    <source>
        <strain>ATCC 25618 / H37Rv</strain>
    </source>
</reference>
<reference key="2">
    <citation type="journal article" date="2011" name="Mol. Cell. Proteomics">
        <title>Proteogenomic analysis of Mycobacterium tuberculosis by high resolution mass spectrometry.</title>
        <authorList>
            <person name="Kelkar D.S."/>
            <person name="Kumar D."/>
            <person name="Kumar P."/>
            <person name="Balakrishnan L."/>
            <person name="Muthusamy B."/>
            <person name="Yadav A.K."/>
            <person name="Shrivastava P."/>
            <person name="Marimuthu A."/>
            <person name="Anand S."/>
            <person name="Sundaram H."/>
            <person name="Kingsbury R."/>
            <person name="Harsha H.C."/>
            <person name="Nair B."/>
            <person name="Prasad T.S."/>
            <person name="Chauhan D.S."/>
            <person name="Katoch K."/>
            <person name="Katoch V.M."/>
            <person name="Kumar P."/>
            <person name="Chaerkady R."/>
            <person name="Ramachandran S."/>
            <person name="Dash D."/>
            <person name="Pandey A."/>
        </authorList>
    </citation>
    <scope>IDENTIFICATION BY MASS SPECTROMETRY [LARGE SCALE ANALYSIS]</scope>
    <source>
        <strain>ATCC 25618 / H37Rv</strain>
    </source>
</reference>
<reference key="3">
    <citation type="journal article" date="2018" name="J. Biol. Chem.">
        <title>The transpeptidase PbpA and noncanonical transglycosylase RodA of Mycobacterium tuberculosis play important roles in regulating bacterial cell lengths.</title>
        <authorList>
            <person name="Arora D."/>
            <person name="Chawla Y."/>
            <person name="Malakar B."/>
            <person name="Singh A."/>
            <person name="Nandicoori V.K."/>
        </authorList>
    </citation>
    <scope>FUNCTION</scope>
    <scope>CATALYTIC ACTIVITY</scope>
    <scope>ACTIVITY REGULATION</scope>
    <scope>PATHWAY</scope>
    <scope>PHOSPHORYLATION AT THR-463</scope>
    <scope>DISRUPTION PHENOTYPE</scope>
    <scope>MUTAGENESIS OF THR-463</scope>
</reference>
<dbReference type="EC" id="2.4.99.28" evidence="5"/>
<dbReference type="EMBL" id="AL123456">
    <property type="protein sequence ID" value="CCP42739.1"/>
    <property type="molecule type" value="Genomic_DNA"/>
</dbReference>
<dbReference type="PIR" id="G70699">
    <property type="entry name" value="G70699"/>
</dbReference>
<dbReference type="RefSeq" id="NP_214531.1">
    <property type="nucleotide sequence ID" value="NC_000962.3"/>
</dbReference>
<dbReference type="RefSeq" id="WP_003400364.1">
    <property type="nucleotide sequence ID" value="NZ_NVQJ01000005.1"/>
</dbReference>
<dbReference type="SMR" id="P9WN99"/>
<dbReference type="FunCoup" id="P9WN99">
    <property type="interactions" value="1"/>
</dbReference>
<dbReference type="STRING" id="83332.Rv0017c"/>
<dbReference type="iPTMnet" id="P9WN99"/>
<dbReference type="PaxDb" id="83332-Rv0017c"/>
<dbReference type="DNASU" id="887075"/>
<dbReference type="GeneID" id="887075"/>
<dbReference type="KEGG" id="mtu:Rv0017c"/>
<dbReference type="KEGG" id="mtv:RVBD_0017c"/>
<dbReference type="TubercuList" id="Rv0017c"/>
<dbReference type="eggNOG" id="COG0772">
    <property type="taxonomic scope" value="Bacteria"/>
</dbReference>
<dbReference type="InParanoid" id="P9WN99"/>
<dbReference type="OrthoDB" id="9812661at2"/>
<dbReference type="PhylomeDB" id="P9WN99"/>
<dbReference type="UniPathway" id="UPA00219"/>
<dbReference type="PHI-base" id="PHI:7982"/>
<dbReference type="Proteomes" id="UP000001584">
    <property type="component" value="Chromosome"/>
</dbReference>
<dbReference type="GO" id="GO:0032153">
    <property type="term" value="C:cell division site"/>
    <property type="evidence" value="ECO:0000318"/>
    <property type="project" value="GO_Central"/>
</dbReference>
<dbReference type="GO" id="GO:0005886">
    <property type="term" value="C:plasma membrane"/>
    <property type="evidence" value="ECO:0000318"/>
    <property type="project" value="GO_Central"/>
</dbReference>
<dbReference type="GO" id="GO:0016757">
    <property type="term" value="F:glycosyltransferase activity"/>
    <property type="evidence" value="ECO:0007669"/>
    <property type="project" value="UniProtKB-KW"/>
</dbReference>
<dbReference type="GO" id="GO:0015648">
    <property type="term" value="F:lipid-linked peptidoglycan transporter activity"/>
    <property type="evidence" value="ECO:0000318"/>
    <property type="project" value="GO_Central"/>
</dbReference>
<dbReference type="GO" id="GO:0051301">
    <property type="term" value="P:cell division"/>
    <property type="evidence" value="ECO:0000314"/>
    <property type="project" value="MTBBASE"/>
</dbReference>
<dbReference type="GO" id="GO:0071555">
    <property type="term" value="P:cell wall organization"/>
    <property type="evidence" value="ECO:0007669"/>
    <property type="project" value="UniProtKB-KW"/>
</dbReference>
<dbReference type="GO" id="GO:0009252">
    <property type="term" value="P:peptidoglycan biosynthetic process"/>
    <property type="evidence" value="ECO:0007669"/>
    <property type="project" value="UniProtKB-UniPathway"/>
</dbReference>
<dbReference type="GO" id="GO:0008360">
    <property type="term" value="P:regulation of cell shape"/>
    <property type="evidence" value="ECO:0000318"/>
    <property type="project" value="GO_Central"/>
</dbReference>
<dbReference type="GO" id="GO:0052167">
    <property type="term" value="P:symbiont-mediated perturbation of host innate immune response"/>
    <property type="evidence" value="ECO:0000314"/>
    <property type="project" value="MTBBASE"/>
</dbReference>
<dbReference type="InterPro" id="IPR018365">
    <property type="entry name" value="Cell_cycle_FtsW-rel_CS"/>
</dbReference>
<dbReference type="InterPro" id="IPR001182">
    <property type="entry name" value="FtsW/RodA"/>
</dbReference>
<dbReference type="PANTHER" id="PTHR30474">
    <property type="entry name" value="CELL CYCLE PROTEIN"/>
    <property type="match status" value="1"/>
</dbReference>
<dbReference type="PANTHER" id="PTHR30474:SF3">
    <property type="entry name" value="PEPTIDOGLYCAN GLYCOSYLTRANSFERASE RODA"/>
    <property type="match status" value="1"/>
</dbReference>
<dbReference type="Pfam" id="PF01098">
    <property type="entry name" value="FTSW_RODA_SPOVE"/>
    <property type="match status" value="1"/>
</dbReference>
<dbReference type="PROSITE" id="PS00428">
    <property type="entry name" value="FTSW_RODA_SPOVE"/>
    <property type="match status" value="1"/>
</dbReference>
<gene>
    <name evidence="3" type="primary">rodA</name>
    <name type="ordered locus">Rv0017c</name>
    <name type="ORF">MTCY10H4.17c</name>
</gene>
<protein>
    <recommendedName>
        <fullName evidence="4">Peptidoglycan glycosyltransferase RodA</fullName>
        <ecNumber evidence="5">2.4.99.28</ecNumber>
    </recommendedName>
    <alternativeName>
        <fullName evidence="3">Non-canonical transglycosylase RodA</fullName>
    </alternativeName>
</protein>
<evidence type="ECO:0000255" key="1"/>
<evidence type="ECO:0000269" key="2">
    <source>
    </source>
</evidence>
<evidence type="ECO:0000303" key="3">
    <source>
    </source>
</evidence>
<evidence type="ECO:0000305" key="4"/>
<evidence type="ECO:0000305" key="5">
    <source>
    </source>
</evidence>
<accession>P9WN99</accession>
<accession>L0T251</accession>
<accession>P63760</accession>
<accession>P71587</accession>